<accession>P19735</accession>
<accession>D6VQ54</accession>
<sequence>MERPSFLDQEPPAGYVPGIGRGATGFSTKEKQVVSNDDKGRRIPKRYRENLNNHLQSQPKDDEDDEAANVFKTLELKLAQKKKKRANEKDDDNSVDSSNVKRQFADLKESLAAVTESEWMDIPDATDFTRRNKRNRIQEQLNRKTYAAPDSLIPGNVDLNKLTEEREKLLQSQIDENLAQLTKNASNPIQVNKPNAATDALSYLKDLENDRVNSLSDATLEDLQKMRTILKSYRKADPTNPQGWIASARLEEKARKFSVAKKIIENGCQECPRSSDIWLENIRLHESDVHYCKTLVATAINFNPTSPLLWFKAIDLESTTVNKYRVVRKALQEIPRDEGLWKLAVSFEADKAQVIKMLEKATQFIPQSMDLLTAYTNLQSYHNAKMTLNSFRKILPQEPEIWIISTLLEERNNPDIPVDKLVSLLKEGLLELSKNGYKATLSAWLKRAEALNDAPNSNLTCQAIVYAILEWLRESGEYESELNNVDQILEKMPHSKVQIAVLKKLIQWDPCDTVLWSRLKMATESYHKIEELLAFFQELLFQTKNSDDIRANMREKSPGLLMMYVSEYWKAQKGDTRQTLVLIDQIIDFAPHNLDLRFFKIKLLGRSLQLDELRDFFQQTFSSLEDFKISGTERLYYKYVNFLRYQDLNEEAIKFLNERCLKSFPICHKFFLQLGQIYHSMGNIEMSRETYLSGTRLVPNCPLLWVSLSKIDEIDLKNPVRARSILDRGLLKNPDDVLFYIAKIQMEIRLGNLDQAELLVTQALQKFPSNALLWVEQIKLFKHGNKSSLKKTIFQDALRRTQNDHRVLLEIGVSFYAEAQYETSLKWLERALKKCSRYGDTWVWLFRTYARLGKDTVDLYNMFDQCEPTYGPEWIAASKNVKMQYCTPREILLRLMNDK</sequence>
<feature type="chain" id="PRO_0000205756" description="Pre-mRNA-splicing factor 6">
    <location>
        <begin position="1"/>
        <end position="899"/>
    </location>
</feature>
<feature type="repeat" description="HAT 1">
    <location>
        <begin position="221"/>
        <end position="253"/>
    </location>
</feature>
<feature type="repeat" description="HAT 2">
    <location>
        <begin position="255"/>
        <end position="287"/>
    </location>
</feature>
<feature type="repeat" description="HAT 3">
    <location>
        <begin position="289"/>
        <end position="318"/>
    </location>
</feature>
<feature type="repeat" description="HAT 4">
    <location>
        <begin position="319"/>
        <end position="350"/>
    </location>
</feature>
<feature type="repeat" description="HAT 5">
    <location>
        <begin position="352"/>
        <end position="381"/>
    </location>
</feature>
<feature type="repeat" description="HAT 6">
    <location>
        <begin position="383"/>
        <end position="414"/>
    </location>
</feature>
<feature type="repeat" description="HAT 7">
    <location>
        <begin position="493"/>
        <end position="525"/>
    </location>
</feature>
<feature type="repeat" description="HAT 8">
    <location>
        <begin position="545"/>
        <end position="578"/>
    </location>
</feature>
<feature type="repeat" description="HAT 9">
    <location>
        <begin position="608"/>
        <end position="645"/>
    </location>
</feature>
<feature type="repeat" description="HAT 10">
    <location>
        <begin position="648"/>
        <end position="680"/>
    </location>
</feature>
<feature type="repeat" description="HAT 11">
    <location>
        <begin position="682"/>
        <end position="714"/>
    </location>
</feature>
<feature type="repeat" description="HAT 12">
    <location>
        <begin position="751"/>
        <end position="783"/>
    </location>
</feature>
<feature type="repeat" description="HAT 13">
    <location>
        <begin position="819"/>
        <end position="851"/>
    </location>
</feature>
<feature type="region of interest" description="Disordered" evidence="1">
    <location>
        <begin position="1"/>
        <end position="65"/>
    </location>
</feature>
<feature type="compositionally biased region" description="Basic and acidic residues" evidence="1">
    <location>
        <begin position="28"/>
        <end position="51"/>
    </location>
</feature>
<reference key="1">
    <citation type="journal article" date="1990" name="EMBO J.">
        <title>The molecular characterization of PRP6 and PRP9 yeast genes reveals a new cysteine/histidine motif common to several splicing factors.</title>
        <authorList>
            <person name="Legrain P."/>
            <person name="Choulika A."/>
        </authorList>
    </citation>
    <scope>NUCLEOTIDE SEQUENCE [GENOMIC DNA]</scope>
    <source>
        <strain>S288c / GRF88</strain>
    </source>
</reference>
<reference key="2">
    <citation type="journal article" date="1995" name="Yeast">
        <title>Sequence and analysis of 24 kb on chromosome II of Saccharomyces cerevisiae.</title>
        <authorList>
            <person name="Aljinovic G."/>
            <person name="Pohl T.M."/>
        </authorList>
    </citation>
    <scope>NUCLEOTIDE SEQUENCE [GENOMIC DNA]</scope>
    <source>
        <strain>ATCC 204508 / S288c</strain>
    </source>
</reference>
<reference key="3">
    <citation type="journal article" date="1994" name="EMBO J.">
        <title>Complete DNA sequence of yeast chromosome II.</title>
        <authorList>
            <person name="Feldmann H."/>
            <person name="Aigle M."/>
            <person name="Aljinovic G."/>
            <person name="Andre B."/>
            <person name="Baclet M.C."/>
            <person name="Barthe C."/>
            <person name="Baur A."/>
            <person name="Becam A.-M."/>
            <person name="Biteau N."/>
            <person name="Boles E."/>
            <person name="Brandt T."/>
            <person name="Brendel M."/>
            <person name="Brueckner M."/>
            <person name="Bussereau F."/>
            <person name="Christiansen C."/>
            <person name="Contreras R."/>
            <person name="Crouzet M."/>
            <person name="Cziepluch C."/>
            <person name="Demolis N."/>
            <person name="Delaveau T."/>
            <person name="Doignon F."/>
            <person name="Domdey H."/>
            <person name="Duesterhus S."/>
            <person name="Dubois E."/>
            <person name="Dujon B."/>
            <person name="El Bakkoury M."/>
            <person name="Entian K.-D."/>
            <person name="Feuermann M."/>
            <person name="Fiers W."/>
            <person name="Fobo G.M."/>
            <person name="Fritz C."/>
            <person name="Gassenhuber J."/>
            <person name="Glansdorff N."/>
            <person name="Goffeau A."/>
            <person name="Grivell L.A."/>
            <person name="de Haan M."/>
            <person name="Hein C."/>
            <person name="Herbert C.J."/>
            <person name="Hollenberg C.P."/>
            <person name="Holmstroem K."/>
            <person name="Jacq C."/>
            <person name="Jacquet M."/>
            <person name="Jauniaux J.-C."/>
            <person name="Jonniaux J.-L."/>
            <person name="Kallesoee T."/>
            <person name="Kiesau P."/>
            <person name="Kirchrath L."/>
            <person name="Koetter P."/>
            <person name="Korol S."/>
            <person name="Liebl S."/>
            <person name="Logghe M."/>
            <person name="Lohan A.J.E."/>
            <person name="Louis E.J."/>
            <person name="Li Z.Y."/>
            <person name="Maat M.J."/>
            <person name="Mallet L."/>
            <person name="Mannhaupt G."/>
            <person name="Messenguy F."/>
            <person name="Miosga T."/>
            <person name="Molemans F."/>
            <person name="Mueller S."/>
            <person name="Nasr F."/>
            <person name="Obermaier B."/>
            <person name="Perea J."/>
            <person name="Pierard A."/>
            <person name="Piravandi E."/>
            <person name="Pohl F.M."/>
            <person name="Pohl T.M."/>
            <person name="Potier S."/>
            <person name="Proft M."/>
            <person name="Purnelle B."/>
            <person name="Ramezani Rad M."/>
            <person name="Rieger M."/>
            <person name="Rose M."/>
            <person name="Schaaff-Gerstenschlaeger I."/>
            <person name="Scherens B."/>
            <person name="Schwarzlose C."/>
            <person name="Skala J."/>
            <person name="Slonimski P.P."/>
            <person name="Smits P.H.M."/>
            <person name="Souciet J.-L."/>
            <person name="Steensma H.Y."/>
            <person name="Stucka R."/>
            <person name="Urrestarazu L.A."/>
            <person name="van der Aart Q.J.M."/>
            <person name="Van Dyck L."/>
            <person name="Vassarotti A."/>
            <person name="Vetter I."/>
            <person name="Vierendeels F."/>
            <person name="Vissers S."/>
            <person name="Wagner G."/>
            <person name="de Wergifosse P."/>
            <person name="Wolfe K.H."/>
            <person name="Zagulski M."/>
            <person name="Zimmermann F.K."/>
            <person name="Mewes H.-W."/>
            <person name="Kleine K."/>
        </authorList>
    </citation>
    <scope>NUCLEOTIDE SEQUENCE [LARGE SCALE GENOMIC DNA]</scope>
    <source>
        <strain>ATCC 204508 / S288c</strain>
    </source>
</reference>
<reference key="4">
    <citation type="journal article" date="2014" name="G3 (Bethesda)">
        <title>The reference genome sequence of Saccharomyces cerevisiae: Then and now.</title>
        <authorList>
            <person name="Engel S.R."/>
            <person name="Dietrich F.S."/>
            <person name="Fisk D.G."/>
            <person name="Binkley G."/>
            <person name="Balakrishnan R."/>
            <person name="Costanzo M.C."/>
            <person name="Dwight S.S."/>
            <person name="Hitz B.C."/>
            <person name="Karra K."/>
            <person name="Nash R.S."/>
            <person name="Weng S."/>
            <person name="Wong E.D."/>
            <person name="Lloyd P."/>
            <person name="Skrzypek M.S."/>
            <person name="Miyasato S.R."/>
            <person name="Simison M."/>
            <person name="Cherry J.M."/>
        </authorList>
    </citation>
    <scope>GENOME REANNOTATION</scope>
    <source>
        <strain>ATCC 204508 / S288c</strain>
    </source>
</reference>
<reference key="5">
    <citation type="journal article" date="1999" name="EMBO J.">
        <title>Identification by mass spectrometry and functional analysis of novel proteins of the yeast [U4/U6.U5] tri-snRNP.</title>
        <authorList>
            <person name="Gottschalk A."/>
            <person name="Neubauer G."/>
            <person name="Banroques J."/>
            <person name="Mann M."/>
            <person name="Luehrmann R."/>
            <person name="Fabrizio P."/>
        </authorList>
    </citation>
    <scope>SUBUNIT</scope>
    <scope>IDENTIFICATION IN THE U4/U5/U6 TRI-SNRNP COMPLEX</scope>
    <scope>IDENTIFICATION BY MASS SPECTROMETRY</scope>
</reference>
<reference key="6">
    <citation type="journal article" date="2003" name="Nature">
        <title>Global analysis of protein expression in yeast.</title>
        <authorList>
            <person name="Ghaemmaghami S."/>
            <person name="Huh W.-K."/>
            <person name="Bower K."/>
            <person name="Howson R.W."/>
            <person name="Belle A."/>
            <person name="Dephoure N."/>
            <person name="O'Shea E.K."/>
            <person name="Weissman J.S."/>
        </authorList>
    </citation>
    <scope>LEVEL OF PROTEIN EXPRESSION [LARGE SCALE ANALYSIS]</scope>
</reference>
<reference key="7">
    <citation type="journal article" date="2008" name="Nat. Struct. Mol. Biol.">
        <title>Localization of Prp8, Brr2, Snu114 and U4/U6 proteins in the yeast tri-snRNP by electron microscopy.</title>
        <authorList>
            <person name="Hacker I."/>
            <person name="Sander B."/>
            <person name="Golas M.M."/>
            <person name="Wolf E."/>
            <person name="Karagoz E."/>
            <person name="Kastner B."/>
            <person name="Stark H."/>
            <person name="Fabrizio P."/>
            <person name="Luhrmann R."/>
        </authorList>
    </citation>
    <scope>SUBUNIT</scope>
    <scope>IDENTIFICATION IN THE U4/U5/U6 TRI-SNRNP COMPLEX</scope>
    <scope>ELECTRON MICROSCOPY</scope>
</reference>
<name>PRP6_YEAST</name>
<organism>
    <name type="scientific">Saccharomyces cerevisiae (strain ATCC 204508 / S288c)</name>
    <name type="common">Baker's yeast</name>
    <dbReference type="NCBI Taxonomy" id="559292"/>
    <lineage>
        <taxon>Eukaryota</taxon>
        <taxon>Fungi</taxon>
        <taxon>Dikarya</taxon>
        <taxon>Ascomycota</taxon>
        <taxon>Saccharomycotina</taxon>
        <taxon>Saccharomycetes</taxon>
        <taxon>Saccharomycetales</taxon>
        <taxon>Saccharomycetaceae</taxon>
        <taxon>Saccharomyces</taxon>
    </lineage>
</organism>
<proteinExistence type="evidence at protein level"/>
<comment type="function">
    <text>Participates in pre-mRNA splicing. Part of the U4/U5/U6 tri-snRNP complex, one of the building blocks of the spliceosome.</text>
</comment>
<comment type="subunit">
    <text evidence="2 4">Component of the U4/U6-U5 tri-snRNP complex composed of the U4, U6 and U5 snRNAs and at least PRP3, PRP4, PRP6, PRP8, PRP18, PRP31, PRP38, SNU13, SNU23, SNU66, SNU114, SPP381, SMB1, SMD1, SMD2, SMD3, SMX2, SMX3, LSM2, LSM3, LSM4, LSM5, LSM6, LSM7, LSM8, BRR2 and DIB1.</text>
</comment>
<comment type="interaction">
    <interactant intactId="EBI-227">
        <id>P19735</id>
    </interactant>
    <interactant intactId="EBI-166">
        <id>Q06819</id>
        <label>DIB1</label>
    </interactant>
    <organismsDiffer>false</organismsDiffer>
    <experiments>4</experiments>
</comment>
<comment type="subcellular location">
    <subcellularLocation>
        <location>Nucleus</location>
    </subcellularLocation>
</comment>
<comment type="miscellaneous">
    <text evidence="3">Present with 2250 molecules/cell in log phase SD medium.</text>
</comment>
<gene>
    <name type="primary">PRP6</name>
    <name type="synonym">RNA6</name>
    <name type="ordered locus">YBR055C</name>
    <name type="ORF">YBR0508</name>
</gene>
<evidence type="ECO:0000256" key="1">
    <source>
        <dbReference type="SAM" id="MobiDB-lite"/>
    </source>
</evidence>
<evidence type="ECO:0000269" key="2">
    <source>
    </source>
</evidence>
<evidence type="ECO:0000269" key="3">
    <source>
    </source>
</evidence>
<evidence type="ECO:0000269" key="4">
    <source>
    </source>
</evidence>
<keyword id="KW-0002">3D-structure</keyword>
<keyword id="KW-0507">mRNA processing</keyword>
<keyword id="KW-0508">mRNA splicing</keyword>
<keyword id="KW-0539">Nucleus</keyword>
<keyword id="KW-1185">Reference proteome</keyword>
<keyword id="KW-0677">Repeat</keyword>
<keyword id="KW-0747">Spliceosome</keyword>
<dbReference type="EMBL" id="X53465">
    <property type="protein sequence ID" value="CAA37559.1"/>
    <property type="molecule type" value="Genomic_DNA"/>
</dbReference>
<dbReference type="EMBL" id="Z35924">
    <property type="protein sequence ID" value="CAA84998.1"/>
    <property type="molecule type" value="Genomic_DNA"/>
</dbReference>
<dbReference type="EMBL" id="Z46260">
    <property type="protein sequence ID" value="CAA86398.1"/>
    <property type="molecule type" value="Genomic_DNA"/>
</dbReference>
<dbReference type="EMBL" id="BK006936">
    <property type="protein sequence ID" value="DAA07174.1"/>
    <property type="molecule type" value="Genomic_DNA"/>
</dbReference>
<dbReference type="PIR" id="S12319">
    <property type="entry name" value="S12319"/>
</dbReference>
<dbReference type="RefSeq" id="NP_009611.1">
    <property type="nucleotide sequence ID" value="NM_001178403.1"/>
</dbReference>
<dbReference type="PDB" id="3JCM">
    <property type="method" value="EM"/>
    <property type="resolution" value="3.80 A"/>
    <property type="chains" value="G=1-899"/>
</dbReference>
<dbReference type="PDB" id="5GAN">
    <property type="method" value="EM"/>
    <property type="resolution" value="3.60 A"/>
    <property type="chains" value="J=1-899"/>
</dbReference>
<dbReference type="PDB" id="5GAP">
    <property type="method" value="EM"/>
    <property type="resolution" value="3.60 A"/>
    <property type="chains" value="J=1-899"/>
</dbReference>
<dbReference type="PDB" id="5NRL">
    <property type="method" value="EM"/>
    <property type="resolution" value="7.20 A"/>
    <property type="chains" value="J=1-899"/>
</dbReference>
<dbReference type="PDB" id="5ZWM">
    <property type="method" value="EM"/>
    <property type="resolution" value="3.40 A"/>
    <property type="chains" value="N=1-899"/>
</dbReference>
<dbReference type="PDB" id="5ZWO">
    <property type="method" value="EM"/>
    <property type="resolution" value="3.90 A"/>
    <property type="chains" value="N=1-899"/>
</dbReference>
<dbReference type="PDBsum" id="3JCM"/>
<dbReference type="PDBsum" id="5GAN"/>
<dbReference type="PDBsum" id="5GAP"/>
<dbReference type="PDBsum" id="5NRL"/>
<dbReference type="PDBsum" id="5ZWM"/>
<dbReference type="PDBsum" id="5ZWO"/>
<dbReference type="EMDB" id="EMD-3683"/>
<dbReference type="EMDB" id="EMD-6972"/>
<dbReference type="EMDB" id="EMD-6974"/>
<dbReference type="EMDB" id="EMD-8012"/>
<dbReference type="EMDB" id="EMD-8014"/>
<dbReference type="SMR" id="P19735"/>
<dbReference type="BioGRID" id="32756">
    <property type="interactions" value="394"/>
</dbReference>
<dbReference type="ComplexPortal" id="CPX-25">
    <property type="entry name" value="U4/U6.U5 tri-small nuclear ribonucleoprotein complex"/>
</dbReference>
<dbReference type="ComplexPortal" id="CPX-29">
    <property type="entry name" value="U5 small nuclear ribonucleoprotein complex"/>
</dbReference>
<dbReference type="DIP" id="DIP-1290N"/>
<dbReference type="FunCoup" id="P19735">
    <property type="interactions" value="533"/>
</dbReference>
<dbReference type="IntAct" id="P19735">
    <property type="interactions" value="123"/>
</dbReference>
<dbReference type="MINT" id="P19735"/>
<dbReference type="STRING" id="4932.YBR055C"/>
<dbReference type="iPTMnet" id="P19735"/>
<dbReference type="PaxDb" id="4932-YBR055C"/>
<dbReference type="PeptideAtlas" id="P19735"/>
<dbReference type="EnsemblFungi" id="YBR055C_mRNA">
    <property type="protein sequence ID" value="YBR055C"/>
    <property type="gene ID" value="YBR055C"/>
</dbReference>
<dbReference type="GeneID" id="852344"/>
<dbReference type="KEGG" id="sce:YBR055C"/>
<dbReference type="AGR" id="SGD:S000000259"/>
<dbReference type="SGD" id="S000000259">
    <property type="gene designation" value="PRP6"/>
</dbReference>
<dbReference type="VEuPathDB" id="FungiDB:YBR055C"/>
<dbReference type="eggNOG" id="KOG0495">
    <property type="taxonomic scope" value="Eukaryota"/>
</dbReference>
<dbReference type="GeneTree" id="ENSGT00940000172817"/>
<dbReference type="HOGENOM" id="CLU_007010_0_0_1"/>
<dbReference type="InParanoid" id="P19735"/>
<dbReference type="OMA" id="DGWAWYY"/>
<dbReference type="OrthoDB" id="440128at2759"/>
<dbReference type="BioCyc" id="YEAST:G3O-29026-MONOMER"/>
<dbReference type="BioGRID-ORCS" id="852344">
    <property type="hits" value="4 hits in 10 CRISPR screens"/>
</dbReference>
<dbReference type="EvolutionaryTrace" id="P19735"/>
<dbReference type="PRO" id="PR:P19735"/>
<dbReference type="Proteomes" id="UP000002311">
    <property type="component" value="Chromosome II"/>
</dbReference>
<dbReference type="RNAct" id="P19735">
    <property type="molecule type" value="protein"/>
</dbReference>
<dbReference type="GO" id="GO:0071013">
    <property type="term" value="C:catalytic step 2 spliceosome"/>
    <property type="evidence" value="ECO:0000318"/>
    <property type="project" value="GO_Central"/>
</dbReference>
<dbReference type="GO" id="GO:0005634">
    <property type="term" value="C:nucleus"/>
    <property type="evidence" value="ECO:0000303"/>
    <property type="project" value="ComplexPortal"/>
</dbReference>
<dbReference type="GO" id="GO:0005681">
    <property type="term" value="C:spliceosomal complex"/>
    <property type="evidence" value="ECO:0000303"/>
    <property type="project" value="ComplexPortal"/>
</dbReference>
<dbReference type="GO" id="GO:0071001">
    <property type="term" value="C:U4/U6 snRNP"/>
    <property type="evidence" value="ECO:0000315"/>
    <property type="project" value="GO_Central"/>
</dbReference>
<dbReference type="GO" id="GO:0046540">
    <property type="term" value="C:U4/U6 x U5 tri-snRNP complex"/>
    <property type="evidence" value="ECO:0000314"/>
    <property type="project" value="GO_Central"/>
</dbReference>
<dbReference type="GO" id="GO:0005682">
    <property type="term" value="C:U5 snRNP"/>
    <property type="evidence" value="ECO:0000303"/>
    <property type="project" value="ComplexPortal"/>
</dbReference>
<dbReference type="GO" id="GO:0000398">
    <property type="term" value="P:mRNA splicing, via spliceosome"/>
    <property type="evidence" value="ECO:0000315"/>
    <property type="project" value="GO_Central"/>
</dbReference>
<dbReference type="GO" id="GO:0000244">
    <property type="term" value="P:spliceosomal tri-snRNP complex assembly"/>
    <property type="evidence" value="ECO:0000318"/>
    <property type="project" value="GO_Central"/>
</dbReference>
<dbReference type="Gene3D" id="1.25.40.10">
    <property type="entry name" value="Tetratricopeptide repeat domain"/>
    <property type="match status" value="3"/>
</dbReference>
<dbReference type="InterPro" id="IPR003107">
    <property type="entry name" value="HAT"/>
</dbReference>
<dbReference type="InterPro" id="IPR010491">
    <property type="entry name" value="PRP1_N"/>
</dbReference>
<dbReference type="InterPro" id="IPR045075">
    <property type="entry name" value="Syf1-like"/>
</dbReference>
<dbReference type="InterPro" id="IPR011990">
    <property type="entry name" value="TPR-like_helical_dom_sf"/>
</dbReference>
<dbReference type="InterPro" id="IPR019734">
    <property type="entry name" value="TPR_rpt"/>
</dbReference>
<dbReference type="PANTHER" id="PTHR11246">
    <property type="entry name" value="PRE-MRNA SPLICING FACTOR"/>
    <property type="match status" value="1"/>
</dbReference>
<dbReference type="PANTHER" id="PTHR11246:SF1">
    <property type="entry name" value="PRE-MRNA-PROCESSING FACTOR 6"/>
    <property type="match status" value="1"/>
</dbReference>
<dbReference type="Pfam" id="PF06424">
    <property type="entry name" value="PRP1_N"/>
    <property type="match status" value="1"/>
</dbReference>
<dbReference type="SMART" id="SM00386">
    <property type="entry name" value="HAT"/>
    <property type="match status" value="7"/>
</dbReference>
<dbReference type="SMART" id="SM00028">
    <property type="entry name" value="TPR"/>
    <property type="match status" value="3"/>
</dbReference>
<dbReference type="SUPFAM" id="SSF48452">
    <property type="entry name" value="TPR-like"/>
    <property type="match status" value="3"/>
</dbReference>
<protein>
    <recommendedName>
        <fullName>Pre-mRNA-splicing factor 6</fullName>
    </recommendedName>
</protein>